<accession>Q80V42</accession>
<accession>Q497S5</accession>
<accession>Q9CYH8</accession>
<gene>
    <name type="primary">Cpm</name>
</gene>
<evidence type="ECO:0000250" key="1"/>
<evidence type="ECO:0000250" key="2">
    <source>
        <dbReference type="UniProtKB" id="P00730"/>
    </source>
</evidence>
<evidence type="ECO:0000250" key="3">
    <source>
        <dbReference type="UniProtKB" id="P14384"/>
    </source>
</evidence>
<evidence type="ECO:0000255" key="4"/>
<evidence type="ECO:0000255" key="5">
    <source>
        <dbReference type="PROSITE-ProRule" id="PRU01379"/>
    </source>
</evidence>
<evidence type="ECO:0000303" key="6">
    <source>
    </source>
</evidence>
<evidence type="ECO:0000305" key="7"/>
<reference key="1">
    <citation type="journal article" date="2005" name="Science">
        <title>The transcriptional landscape of the mammalian genome.</title>
        <authorList>
            <person name="Carninci P."/>
            <person name="Kasukawa T."/>
            <person name="Katayama S."/>
            <person name="Gough J."/>
            <person name="Frith M.C."/>
            <person name="Maeda N."/>
            <person name="Oyama R."/>
            <person name="Ravasi T."/>
            <person name="Lenhard B."/>
            <person name="Wells C."/>
            <person name="Kodzius R."/>
            <person name="Shimokawa K."/>
            <person name="Bajic V.B."/>
            <person name="Brenner S.E."/>
            <person name="Batalov S."/>
            <person name="Forrest A.R."/>
            <person name="Zavolan M."/>
            <person name="Davis M.J."/>
            <person name="Wilming L.G."/>
            <person name="Aidinis V."/>
            <person name="Allen J.E."/>
            <person name="Ambesi-Impiombato A."/>
            <person name="Apweiler R."/>
            <person name="Aturaliya R.N."/>
            <person name="Bailey T.L."/>
            <person name="Bansal M."/>
            <person name="Baxter L."/>
            <person name="Beisel K.W."/>
            <person name="Bersano T."/>
            <person name="Bono H."/>
            <person name="Chalk A.M."/>
            <person name="Chiu K.P."/>
            <person name="Choudhary V."/>
            <person name="Christoffels A."/>
            <person name="Clutterbuck D.R."/>
            <person name="Crowe M.L."/>
            <person name="Dalla E."/>
            <person name="Dalrymple B.P."/>
            <person name="de Bono B."/>
            <person name="Della Gatta G."/>
            <person name="di Bernardo D."/>
            <person name="Down T."/>
            <person name="Engstrom P."/>
            <person name="Fagiolini M."/>
            <person name="Faulkner G."/>
            <person name="Fletcher C.F."/>
            <person name="Fukushima T."/>
            <person name="Furuno M."/>
            <person name="Futaki S."/>
            <person name="Gariboldi M."/>
            <person name="Georgii-Hemming P."/>
            <person name="Gingeras T.R."/>
            <person name="Gojobori T."/>
            <person name="Green R.E."/>
            <person name="Gustincich S."/>
            <person name="Harbers M."/>
            <person name="Hayashi Y."/>
            <person name="Hensch T.K."/>
            <person name="Hirokawa N."/>
            <person name="Hill D."/>
            <person name="Huminiecki L."/>
            <person name="Iacono M."/>
            <person name="Ikeo K."/>
            <person name="Iwama A."/>
            <person name="Ishikawa T."/>
            <person name="Jakt M."/>
            <person name="Kanapin A."/>
            <person name="Katoh M."/>
            <person name="Kawasawa Y."/>
            <person name="Kelso J."/>
            <person name="Kitamura H."/>
            <person name="Kitano H."/>
            <person name="Kollias G."/>
            <person name="Krishnan S.P."/>
            <person name="Kruger A."/>
            <person name="Kummerfeld S.K."/>
            <person name="Kurochkin I.V."/>
            <person name="Lareau L.F."/>
            <person name="Lazarevic D."/>
            <person name="Lipovich L."/>
            <person name="Liu J."/>
            <person name="Liuni S."/>
            <person name="McWilliam S."/>
            <person name="Madan Babu M."/>
            <person name="Madera M."/>
            <person name="Marchionni L."/>
            <person name="Matsuda H."/>
            <person name="Matsuzawa S."/>
            <person name="Miki H."/>
            <person name="Mignone F."/>
            <person name="Miyake S."/>
            <person name="Morris K."/>
            <person name="Mottagui-Tabar S."/>
            <person name="Mulder N."/>
            <person name="Nakano N."/>
            <person name="Nakauchi H."/>
            <person name="Ng P."/>
            <person name="Nilsson R."/>
            <person name="Nishiguchi S."/>
            <person name="Nishikawa S."/>
            <person name="Nori F."/>
            <person name="Ohara O."/>
            <person name="Okazaki Y."/>
            <person name="Orlando V."/>
            <person name="Pang K.C."/>
            <person name="Pavan W.J."/>
            <person name="Pavesi G."/>
            <person name="Pesole G."/>
            <person name="Petrovsky N."/>
            <person name="Piazza S."/>
            <person name="Reed J."/>
            <person name="Reid J.F."/>
            <person name="Ring B.Z."/>
            <person name="Ringwald M."/>
            <person name="Rost B."/>
            <person name="Ruan Y."/>
            <person name="Salzberg S.L."/>
            <person name="Sandelin A."/>
            <person name="Schneider C."/>
            <person name="Schoenbach C."/>
            <person name="Sekiguchi K."/>
            <person name="Semple C.A."/>
            <person name="Seno S."/>
            <person name="Sessa L."/>
            <person name="Sheng Y."/>
            <person name="Shibata Y."/>
            <person name="Shimada H."/>
            <person name="Shimada K."/>
            <person name="Silva D."/>
            <person name="Sinclair B."/>
            <person name="Sperling S."/>
            <person name="Stupka E."/>
            <person name="Sugiura K."/>
            <person name="Sultana R."/>
            <person name="Takenaka Y."/>
            <person name="Taki K."/>
            <person name="Tammoja K."/>
            <person name="Tan S.L."/>
            <person name="Tang S."/>
            <person name="Taylor M.S."/>
            <person name="Tegner J."/>
            <person name="Teichmann S.A."/>
            <person name="Ueda H.R."/>
            <person name="van Nimwegen E."/>
            <person name="Verardo R."/>
            <person name="Wei C.L."/>
            <person name="Yagi K."/>
            <person name="Yamanishi H."/>
            <person name="Zabarovsky E."/>
            <person name="Zhu S."/>
            <person name="Zimmer A."/>
            <person name="Hide W."/>
            <person name="Bult C."/>
            <person name="Grimmond S.M."/>
            <person name="Teasdale R.D."/>
            <person name="Liu E.T."/>
            <person name="Brusic V."/>
            <person name="Quackenbush J."/>
            <person name="Wahlestedt C."/>
            <person name="Mattick J.S."/>
            <person name="Hume D.A."/>
            <person name="Kai C."/>
            <person name="Sasaki D."/>
            <person name="Tomaru Y."/>
            <person name="Fukuda S."/>
            <person name="Kanamori-Katayama M."/>
            <person name="Suzuki M."/>
            <person name="Aoki J."/>
            <person name="Arakawa T."/>
            <person name="Iida J."/>
            <person name="Imamura K."/>
            <person name="Itoh M."/>
            <person name="Kato T."/>
            <person name="Kawaji H."/>
            <person name="Kawagashira N."/>
            <person name="Kawashima T."/>
            <person name="Kojima M."/>
            <person name="Kondo S."/>
            <person name="Konno H."/>
            <person name="Nakano K."/>
            <person name="Ninomiya N."/>
            <person name="Nishio T."/>
            <person name="Okada M."/>
            <person name="Plessy C."/>
            <person name="Shibata K."/>
            <person name="Shiraki T."/>
            <person name="Suzuki S."/>
            <person name="Tagami M."/>
            <person name="Waki K."/>
            <person name="Watahiki A."/>
            <person name="Okamura-Oho Y."/>
            <person name="Suzuki H."/>
            <person name="Kawai J."/>
            <person name="Hayashizaki Y."/>
        </authorList>
    </citation>
    <scope>NUCLEOTIDE SEQUENCE [LARGE SCALE MRNA] (ISOFORM 2)</scope>
    <source>
        <strain>C57BL/6J</strain>
        <tissue>Embryo</tissue>
    </source>
</reference>
<reference key="2">
    <citation type="journal article" date="2004" name="Genome Res.">
        <title>The status, quality, and expansion of the NIH full-length cDNA project: the Mammalian Gene Collection (MGC).</title>
        <authorList>
            <consortium name="The MGC Project Team"/>
        </authorList>
    </citation>
    <scope>NUCLEOTIDE SEQUENCE [LARGE SCALE MRNA] (ISOFORM 1)</scope>
    <source>
        <strain>129</strain>
        <strain>C57BL/6J</strain>
        <tissue>Kidney</tissue>
        <tissue>Mammary tumor</tissue>
    </source>
</reference>
<reference key="3">
    <citation type="journal article" date="2010" name="Cell">
        <title>A tissue-specific atlas of mouse protein phosphorylation and expression.</title>
        <authorList>
            <person name="Huttlin E.L."/>
            <person name="Jedrychowski M.P."/>
            <person name="Elias J.E."/>
            <person name="Goswami T."/>
            <person name="Rad R."/>
            <person name="Beausoleil S.A."/>
            <person name="Villen J."/>
            <person name="Haas W."/>
            <person name="Sowa M.E."/>
            <person name="Gygi S.P."/>
        </authorList>
    </citation>
    <scope>IDENTIFICATION BY MASS SPECTROMETRY [LARGE SCALE ANALYSIS]</scope>
    <source>
        <tissue>Kidney</tissue>
        <tissue>Lung</tissue>
    </source>
</reference>
<feature type="signal peptide" evidence="4">
    <location>
        <begin position="1"/>
        <end position="17"/>
    </location>
</feature>
<feature type="chain" id="PRO_0000004392" description="Carboxypeptidase M">
    <location>
        <begin position="18"/>
        <end position="423"/>
    </location>
</feature>
<feature type="propeptide" id="PRO_0000251911" description="Removed in mature form" evidence="1">
    <location>
        <begin position="424"/>
        <end position="443"/>
    </location>
</feature>
<feature type="domain" description="Peptidase M14" evidence="5">
    <location>
        <begin position="21"/>
        <end position="311"/>
    </location>
</feature>
<feature type="active site" description="Proton donor/acceptor" evidence="5">
    <location>
        <position position="281"/>
    </location>
</feature>
<feature type="binding site" evidence="5">
    <location>
        <position position="83"/>
    </location>
    <ligand>
        <name>Zn(2+)</name>
        <dbReference type="ChEBI" id="CHEBI:29105"/>
        <note>catalytic</note>
    </ligand>
</feature>
<feature type="binding site" evidence="5">
    <location>
        <position position="86"/>
    </location>
    <ligand>
        <name>Zn(2+)</name>
        <dbReference type="ChEBI" id="CHEBI:29105"/>
        <note>catalytic</note>
    </ligand>
</feature>
<feature type="binding site" evidence="5">
    <location>
        <position position="190"/>
    </location>
    <ligand>
        <name>Zn(2+)</name>
        <dbReference type="ChEBI" id="CHEBI:29105"/>
        <note>catalytic</note>
    </ligand>
</feature>
<feature type="lipid moiety-binding region" description="GPI-anchor amidated serine" evidence="1">
    <location>
        <position position="423"/>
    </location>
</feature>
<feature type="glycosylation site" description="N-linked (GlcNAc...) asparagine" evidence="4">
    <location>
        <position position="38"/>
    </location>
</feature>
<feature type="glycosylation site" description="N-linked (GlcNAc...) asparagine" evidence="4">
    <location>
        <position position="164"/>
    </location>
</feature>
<feature type="glycosylation site" description="N-linked (GlcNAc...) asparagine" evidence="4">
    <location>
        <position position="363"/>
    </location>
</feature>
<feature type="disulfide bond" evidence="3">
    <location>
        <begin position="138"/>
        <end position="285"/>
    </location>
</feature>
<feature type="disulfide bond" evidence="3">
    <location>
        <begin position="242"/>
        <end position="284"/>
    </location>
</feature>
<feature type="disulfide bond" evidence="3">
    <location>
        <begin position="341"/>
        <end position="410"/>
    </location>
</feature>
<feature type="splice variant" id="VSP_014606" description="In isoform 2." evidence="6">
    <location>
        <begin position="1"/>
        <end position="255"/>
    </location>
</feature>
<feature type="splice variant" id="VSP_014607" description="In isoform 2." evidence="6">
    <original>YSWYPLQ</original>
    <variation>MRCACFA</variation>
    <location>
        <begin position="256"/>
        <end position="262"/>
    </location>
</feature>
<sequence>MDRARLWLGLLLPVVAALDFRYHHQEGMEAFLKSVAQNYSSITHLHSIGKSVRGRNLWVLVVGQTPKEHRVGIPEFKYVANMHGDETVGRELLLHLIDYLVSSYRKDPEITHLIDSTRIHIMPSMNPDGFEAVQKPDCYYSNGRENYNNYDLNRNFPDAFENNNVTKQPETLAIMEWLKTETFVLSANLHGGALVASYPFDNGVQATGTLLSRSLTPDDDVFQHLAYTYASRNPNMTKGDQCKNKRNFPNGIINGYSWYPLQGGMQDYNYIWAQCFEITLELSCCKYPREEKLPLFWNDNKASLIEYIKQVHLGVKGQVFDQSGAPLPNVIVEVQDRKHICPFRTNKLGEYYLLLLPGSYVINVTVPGHDSYLTKLTIPGKSQPFSALKKDFHLPLRWQPDSISVSNPSCPMIPLYKFMPSHSAATKPSLGVFFMTLLYVFFK</sequence>
<proteinExistence type="evidence at protein level"/>
<keyword id="KW-0025">Alternative splicing</keyword>
<keyword id="KW-0121">Carboxypeptidase</keyword>
<keyword id="KW-1003">Cell membrane</keyword>
<keyword id="KW-1015">Disulfide bond</keyword>
<keyword id="KW-0325">Glycoprotein</keyword>
<keyword id="KW-0336">GPI-anchor</keyword>
<keyword id="KW-0378">Hydrolase</keyword>
<keyword id="KW-0449">Lipoprotein</keyword>
<keyword id="KW-0472">Membrane</keyword>
<keyword id="KW-0479">Metal-binding</keyword>
<keyword id="KW-0482">Metalloprotease</keyword>
<keyword id="KW-0645">Protease</keyword>
<keyword id="KW-1185">Reference proteome</keyword>
<keyword id="KW-0732">Signal</keyword>
<keyword id="KW-0862">Zinc</keyword>
<dbReference type="EC" id="3.4.17.12"/>
<dbReference type="EMBL" id="AK017670">
    <property type="protein sequence ID" value="BAB30865.1"/>
    <property type="molecule type" value="mRNA"/>
</dbReference>
<dbReference type="EMBL" id="BC047389">
    <property type="protein sequence ID" value="AAH47389.1"/>
    <property type="status" value="ALT_INIT"/>
    <property type="molecule type" value="mRNA"/>
</dbReference>
<dbReference type="EMBL" id="BC100404">
    <property type="protein sequence ID" value="AAI00405.1"/>
    <property type="molecule type" value="mRNA"/>
</dbReference>
<dbReference type="CCDS" id="CCDS48696.1">
    <molecule id="Q80V42-1"/>
</dbReference>
<dbReference type="RefSeq" id="NP_081744.1">
    <molecule id="Q80V42-1"/>
    <property type="nucleotide sequence ID" value="NM_027468.1"/>
</dbReference>
<dbReference type="RefSeq" id="XP_036011899.1">
    <molecule id="Q80V42-1"/>
    <property type="nucleotide sequence ID" value="XM_036156006.1"/>
</dbReference>
<dbReference type="SMR" id="Q80V42"/>
<dbReference type="BioGRID" id="214144">
    <property type="interactions" value="1"/>
</dbReference>
<dbReference type="FunCoup" id="Q80V42">
    <property type="interactions" value="314"/>
</dbReference>
<dbReference type="STRING" id="10090.ENSMUSP00000020399"/>
<dbReference type="MEROPS" id="M14.006"/>
<dbReference type="GlyConnect" id="2186">
    <property type="glycosylation" value="10 N-Linked glycans (3 sites)"/>
</dbReference>
<dbReference type="GlyCosmos" id="Q80V42">
    <property type="glycosylation" value="4 sites, 10 glycans"/>
</dbReference>
<dbReference type="GlyGen" id="Q80V42">
    <property type="glycosylation" value="5 sites, 13 N-linked glycans (4 sites), 1 O-linked glycan (1 site)"/>
</dbReference>
<dbReference type="iPTMnet" id="Q80V42"/>
<dbReference type="PhosphoSitePlus" id="Q80V42"/>
<dbReference type="SwissPalm" id="Q80V42"/>
<dbReference type="jPOST" id="Q80V42"/>
<dbReference type="PaxDb" id="10090-ENSMUSP00000020399"/>
<dbReference type="PeptideAtlas" id="Q80V42"/>
<dbReference type="ProteomicsDB" id="265681">
    <molecule id="Q80V42-1"/>
</dbReference>
<dbReference type="ProteomicsDB" id="265682">
    <molecule id="Q80V42-2"/>
</dbReference>
<dbReference type="Antibodypedia" id="975">
    <property type="antibodies" value="367 antibodies from 35 providers"/>
</dbReference>
<dbReference type="DNASU" id="70574"/>
<dbReference type="Ensembl" id="ENSMUST00000020399.6">
    <molecule id="Q80V42-1"/>
    <property type="protein sequence ID" value="ENSMUSP00000020399.6"/>
    <property type="gene ID" value="ENSMUSG00000020183.12"/>
</dbReference>
<dbReference type="GeneID" id="70574"/>
<dbReference type="KEGG" id="mmu:70574"/>
<dbReference type="UCSC" id="uc007hdi.2">
    <molecule id="Q80V42-1"/>
    <property type="organism name" value="mouse"/>
</dbReference>
<dbReference type="UCSC" id="uc007hdk.2">
    <molecule id="Q80V42-2"/>
    <property type="organism name" value="mouse"/>
</dbReference>
<dbReference type="AGR" id="MGI:1917824"/>
<dbReference type="CTD" id="1368"/>
<dbReference type="MGI" id="MGI:1917824">
    <property type="gene designation" value="Cpm"/>
</dbReference>
<dbReference type="VEuPathDB" id="HostDB:ENSMUSG00000020183"/>
<dbReference type="eggNOG" id="KOG2649">
    <property type="taxonomic scope" value="Eukaryota"/>
</dbReference>
<dbReference type="GeneTree" id="ENSGT00940000158580"/>
<dbReference type="HOGENOM" id="CLU_006722_1_0_1"/>
<dbReference type="InParanoid" id="Q80V42"/>
<dbReference type="OMA" id="GHEPYLT"/>
<dbReference type="OrthoDB" id="10249045at2759"/>
<dbReference type="PhylomeDB" id="Q80V42"/>
<dbReference type="TreeFam" id="TF315592"/>
<dbReference type="BRENDA" id="3.4.17.12">
    <property type="organism ID" value="3474"/>
</dbReference>
<dbReference type="Reactome" id="R-MMU-163125">
    <property type="pathway name" value="Post-translational modification: synthesis of GPI-anchored proteins"/>
</dbReference>
<dbReference type="BioGRID-ORCS" id="70574">
    <property type="hits" value="3 hits in 77 CRISPR screens"/>
</dbReference>
<dbReference type="ChiTaRS" id="Cpm">
    <property type="organism name" value="mouse"/>
</dbReference>
<dbReference type="PRO" id="PR:Q80V42"/>
<dbReference type="Proteomes" id="UP000000589">
    <property type="component" value="Chromosome 10"/>
</dbReference>
<dbReference type="RNAct" id="Q80V42">
    <property type="molecule type" value="protein"/>
</dbReference>
<dbReference type="Bgee" id="ENSMUSG00000020183">
    <property type="expression patterns" value="Expressed in left lung lobe and 235 other cell types or tissues"/>
</dbReference>
<dbReference type="GO" id="GO:0005886">
    <property type="term" value="C:plasma membrane"/>
    <property type="evidence" value="ECO:0007669"/>
    <property type="project" value="UniProtKB-SubCell"/>
</dbReference>
<dbReference type="GO" id="GO:0098552">
    <property type="term" value="C:side of membrane"/>
    <property type="evidence" value="ECO:0007669"/>
    <property type="project" value="UniProtKB-KW"/>
</dbReference>
<dbReference type="GO" id="GO:0004181">
    <property type="term" value="F:metallocarboxypeptidase activity"/>
    <property type="evidence" value="ECO:0007669"/>
    <property type="project" value="InterPro"/>
</dbReference>
<dbReference type="GO" id="GO:0008270">
    <property type="term" value="F:zinc ion binding"/>
    <property type="evidence" value="ECO:0007669"/>
    <property type="project" value="InterPro"/>
</dbReference>
<dbReference type="GO" id="GO:0006508">
    <property type="term" value="P:proteolysis"/>
    <property type="evidence" value="ECO:0007669"/>
    <property type="project" value="UniProtKB-KW"/>
</dbReference>
<dbReference type="CDD" id="cd03866">
    <property type="entry name" value="M14_CPM"/>
    <property type="match status" value="1"/>
</dbReference>
<dbReference type="CDD" id="cd11308">
    <property type="entry name" value="Peptidase_M14NE-CP-C_like"/>
    <property type="match status" value="1"/>
</dbReference>
<dbReference type="FunFam" id="2.60.40.1120:FF:000014">
    <property type="entry name" value="Carboxypeptidase M"/>
    <property type="match status" value="1"/>
</dbReference>
<dbReference type="FunFam" id="3.40.630.10:FF:000041">
    <property type="entry name" value="Carboxypeptidase M"/>
    <property type="match status" value="1"/>
</dbReference>
<dbReference type="Gene3D" id="2.60.40.1120">
    <property type="entry name" value="Carboxypeptidase-like, regulatory domain"/>
    <property type="match status" value="1"/>
</dbReference>
<dbReference type="Gene3D" id="3.40.630.10">
    <property type="entry name" value="Zn peptidases"/>
    <property type="match status" value="1"/>
</dbReference>
<dbReference type="InterPro" id="IPR008969">
    <property type="entry name" value="CarboxyPept-like_regulatory"/>
</dbReference>
<dbReference type="InterPro" id="IPR033842">
    <property type="entry name" value="CPM_N"/>
</dbReference>
<dbReference type="InterPro" id="IPR000834">
    <property type="entry name" value="Peptidase_M14"/>
</dbReference>
<dbReference type="InterPro" id="IPR050753">
    <property type="entry name" value="Peptidase_M14_domain"/>
</dbReference>
<dbReference type="PANTHER" id="PTHR11532:SF84">
    <property type="entry name" value="CARBOXYPEPTIDASE M"/>
    <property type="match status" value="1"/>
</dbReference>
<dbReference type="PANTHER" id="PTHR11532">
    <property type="entry name" value="PROTEASE M14 CARBOXYPEPTIDASE"/>
    <property type="match status" value="1"/>
</dbReference>
<dbReference type="Pfam" id="PF13620">
    <property type="entry name" value="CarboxypepD_reg"/>
    <property type="match status" value="1"/>
</dbReference>
<dbReference type="Pfam" id="PF00246">
    <property type="entry name" value="Peptidase_M14"/>
    <property type="match status" value="1"/>
</dbReference>
<dbReference type="PRINTS" id="PR00765">
    <property type="entry name" value="CRBOXYPTASEA"/>
</dbReference>
<dbReference type="SMART" id="SM00631">
    <property type="entry name" value="Zn_pept"/>
    <property type="match status" value="1"/>
</dbReference>
<dbReference type="SUPFAM" id="SSF49464">
    <property type="entry name" value="Carboxypeptidase regulatory domain-like"/>
    <property type="match status" value="1"/>
</dbReference>
<dbReference type="SUPFAM" id="SSF53187">
    <property type="entry name" value="Zn-dependent exopeptidases"/>
    <property type="match status" value="1"/>
</dbReference>
<dbReference type="PROSITE" id="PS00132">
    <property type="entry name" value="CARBOXYPEPT_ZN_1"/>
    <property type="match status" value="1"/>
</dbReference>
<dbReference type="PROSITE" id="PS00133">
    <property type="entry name" value="CARBOXYPEPT_ZN_2"/>
    <property type="match status" value="1"/>
</dbReference>
<dbReference type="PROSITE" id="PS52035">
    <property type="entry name" value="PEPTIDASE_M14"/>
    <property type="match status" value="1"/>
</dbReference>
<comment type="function">
    <text evidence="1">Specifically removes C-terminal basic residues (Arg or Lys) from peptides and proteins. It is believed to play important roles in the control of peptide hormone and growth factor activity at the cell surface, and in the membrane-localized degradation of extracellular proteins (By similarity).</text>
</comment>
<comment type="catalytic activity">
    <reaction>
        <text>Cleavage of C-terminal arginine or lysine residues from polypeptides.</text>
        <dbReference type="EC" id="3.4.17.12"/>
    </reaction>
</comment>
<comment type="cofactor">
    <cofactor evidence="2">
        <name>Zn(2+)</name>
        <dbReference type="ChEBI" id="CHEBI:29105"/>
    </cofactor>
    <text evidence="2">Binds 1 zinc ion per subunit.</text>
</comment>
<comment type="subcellular location">
    <subcellularLocation>
        <location evidence="1">Cell membrane</location>
        <topology evidence="1">Lipid-anchor</topology>
        <topology evidence="1">GPI-anchor</topology>
    </subcellularLocation>
</comment>
<comment type="alternative products">
    <event type="alternative splicing"/>
    <isoform>
        <id>Q80V42-1</id>
        <name>1</name>
        <sequence type="displayed"/>
    </isoform>
    <isoform>
        <id>Q80V42-2</id>
        <name>2</name>
        <sequence type="described" ref="VSP_014606 VSP_014607"/>
    </isoform>
</comment>
<comment type="similarity">
    <text evidence="7">Belongs to the peptidase M14 family.</text>
</comment>
<comment type="sequence caution" evidence="7">
    <conflict type="erroneous initiation">
        <sequence resource="EMBL-CDS" id="AAH47389"/>
    </conflict>
</comment>
<protein>
    <recommendedName>
        <fullName>Carboxypeptidase M</fullName>
        <shortName>CPM</shortName>
        <ecNumber>3.4.17.12</ecNumber>
    </recommendedName>
</protein>
<organism>
    <name type="scientific">Mus musculus</name>
    <name type="common">Mouse</name>
    <dbReference type="NCBI Taxonomy" id="10090"/>
    <lineage>
        <taxon>Eukaryota</taxon>
        <taxon>Metazoa</taxon>
        <taxon>Chordata</taxon>
        <taxon>Craniata</taxon>
        <taxon>Vertebrata</taxon>
        <taxon>Euteleostomi</taxon>
        <taxon>Mammalia</taxon>
        <taxon>Eutheria</taxon>
        <taxon>Euarchontoglires</taxon>
        <taxon>Glires</taxon>
        <taxon>Rodentia</taxon>
        <taxon>Myomorpha</taxon>
        <taxon>Muroidea</taxon>
        <taxon>Muridae</taxon>
        <taxon>Murinae</taxon>
        <taxon>Mus</taxon>
        <taxon>Mus</taxon>
    </lineage>
</organism>
<name>CBPM_MOUSE</name>